<protein>
    <recommendedName>
        <fullName>Uncharacterized protein DDB_G0290387</fullName>
    </recommendedName>
</protein>
<comment type="subcellular location">
    <subcellularLocation>
        <location evidence="3">Secreted</location>
    </subcellularLocation>
</comment>
<accession>Q54G58</accession>
<evidence type="ECO:0000255" key="1"/>
<evidence type="ECO:0000256" key="2">
    <source>
        <dbReference type="SAM" id="MobiDB-lite"/>
    </source>
</evidence>
<evidence type="ECO:0000305" key="3"/>
<keyword id="KW-0325">Glycoprotein</keyword>
<keyword id="KW-1185">Reference proteome</keyword>
<keyword id="KW-0964">Secreted</keyword>
<keyword id="KW-0732">Signal</keyword>
<sequence>MKSLALLLSLLINFSIGSYINFIPYDNSDCTGAINGGGWSILEYACFSIDVRYNYQFTTHTLNGEGFVQWTQFPRVVGKTQCFYQDLPISNASIGSCYKNNPLSTFDIFRSLPSNQYYLISVTSEPFYPTNQAGMIVLQYMGNGECSNDNVEIMQYFTNNTQSEDGITGIQMKWYCNDENEPYETQCFNGKNCFDMPQQYKCSPTHPFFNTSDEISGGTGAGDYSGTGSGSSSGNSGTSDGGSSGSGSGSGSGAFISIIDQNDKNNNKNNNKNKNNNNNNNNYNQYEKSTGDGGITKPHDNYISSFCT</sequence>
<proteinExistence type="inferred from homology"/>
<feature type="signal peptide" evidence="1">
    <location>
        <begin position="1"/>
        <end position="17"/>
    </location>
</feature>
<feature type="chain" id="PRO_0000393124" description="Uncharacterized protein DDB_G0290387">
    <location>
        <begin position="18"/>
        <end position="308"/>
    </location>
</feature>
<feature type="region of interest" description="Disordered" evidence="2">
    <location>
        <begin position="213"/>
        <end position="308"/>
    </location>
</feature>
<feature type="compositionally biased region" description="Gly residues" evidence="2">
    <location>
        <begin position="217"/>
        <end position="231"/>
    </location>
</feature>
<feature type="compositionally biased region" description="Gly residues" evidence="2">
    <location>
        <begin position="239"/>
        <end position="252"/>
    </location>
</feature>
<feature type="compositionally biased region" description="Low complexity" evidence="2">
    <location>
        <begin position="267"/>
        <end position="284"/>
    </location>
</feature>
<feature type="glycosylation site" description="N-linked (GlcNAc...) asparagine" evidence="1">
    <location>
        <position position="13"/>
    </location>
</feature>
<feature type="glycosylation site" description="N-linked (GlcNAc...) asparagine" evidence="1">
    <location>
        <position position="91"/>
    </location>
</feature>
<feature type="glycosylation site" description="N-linked (GlcNAc...) asparagine" evidence="1">
    <location>
        <position position="159"/>
    </location>
</feature>
<feature type="glycosylation site" description="N-linked (GlcNAc...) asparagine" evidence="1">
    <location>
        <position position="210"/>
    </location>
</feature>
<reference key="1">
    <citation type="journal article" date="2005" name="Nature">
        <title>The genome of the social amoeba Dictyostelium discoideum.</title>
        <authorList>
            <person name="Eichinger L."/>
            <person name="Pachebat J.A."/>
            <person name="Gloeckner G."/>
            <person name="Rajandream M.A."/>
            <person name="Sucgang R."/>
            <person name="Berriman M."/>
            <person name="Song J."/>
            <person name="Olsen R."/>
            <person name="Szafranski K."/>
            <person name="Xu Q."/>
            <person name="Tunggal B."/>
            <person name="Kummerfeld S."/>
            <person name="Madera M."/>
            <person name="Konfortov B.A."/>
            <person name="Rivero F."/>
            <person name="Bankier A.T."/>
            <person name="Lehmann R."/>
            <person name="Hamlin N."/>
            <person name="Davies R."/>
            <person name="Gaudet P."/>
            <person name="Fey P."/>
            <person name="Pilcher K."/>
            <person name="Chen G."/>
            <person name="Saunders D."/>
            <person name="Sodergren E.J."/>
            <person name="Davis P."/>
            <person name="Kerhornou A."/>
            <person name="Nie X."/>
            <person name="Hall N."/>
            <person name="Anjard C."/>
            <person name="Hemphill L."/>
            <person name="Bason N."/>
            <person name="Farbrother P."/>
            <person name="Desany B."/>
            <person name="Just E."/>
            <person name="Morio T."/>
            <person name="Rost R."/>
            <person name="Churcher C.M."/>
            <person name="Cooper J."/>
            <person name="Haydock S."/>
            <person name="van Driessche N."/>
            <person name="Cronin A."/>
            <person name="Goodhead I."/>
            <person name="Muzny D.M."/>
            <person name="Mourier T."/>
            <person name="Pain A."/>
            <person name="Lu M."/>
            <person name="Harper D."/>
            <person name="Lindsay R."/>
            <person name="Hauser H."/>
            <person name="James K.D."/>
            <person name="Quiles M."/>
            <person name="Madan Babu M."/>
            <person name="Saito T."/>
            <person name="Buchrieser C."/>
            <person name="Wardroper A."/>
            <person name="Felder M."/>
            <person name="Thangavelu M."/>
            <person name="Johnson D."/>
            <person name="Knights A."/>
            <person name="Loulseged H."/>
            <person name="Mungall K.L."/>
            <person name="Oliver K."/>
            <person name="Price C."/>
            <person name="Quail M.A."/>
            <person name="Urushihara H."/>
            <person name="Hernandez J."/>
            <person name="Rabbinowitsch E."/>
            <person name="Steffen D."/>
            <person name="Sanders M."/>
            <person name="Ma J."/>
            <person name="Kohara Y."/>
            <person name="Sharp S."/>
            <person name="Simmonds M.N."/>
            <person name="Spiegler S."/>
            <person name="Tivey A."/>
            <person name="Sugano S."/>
            <person name="White B."/>
            <person name="Walker D."/>
            <person name="Woodward J.R."/>
            <person name="Winckler T."/>
            <person name="Tanaka Y."/>
            <person name="Shaulsky G."/>
            <person name="Schleicher M."/>
            <person name="Weinstock G.M."/>
            <person name="Rosenthal A."/>
            <person name="Cox E.C."/>
            <person name="Chisholm R.L."/>
            <person name="Gibbs R.A."/>
            <person name="Loomis W.F."/>
            <person name="Platzer M."/>
            <person name="Kay R.R."/>
            <person name="Williams J.G."/>
            <person name="Dear P.H."/>
            <person name="Noegel A.A."/>
            <person name="Barrell B.G."/>
            <person name="Kuspa A."/>
        </authorList>
    </citation>
    <scope>NUCLEOTIDE SEQUENCE [LARGE SCALE GENOMIC DNA]</scope>
    <source>
        <strain>AX4</strain>
    </source>
</reference>
<reference key="2">
    <citation type="journal article" date="2007" name="Proc. Natl. Acad. Sci. U.S.A.">
        <title>Global transcriptional responses to cisplatin in Dictyostelium discoideum identify potential drug targets.</title>
        <authorList>
            <person name="Van Driessche N."/>
            <person name="Alexander H."/>
            <person name="Min J."/>
            <person name="Kuspa A."/>
            <person name="Alexander S."/>
            <person name="Shaulsky G."/>
        </authorList>
    </citation>
    <scope>IDENTIFICATION</scope>
</reference>
<dbReference type="EMBL" id="AAFI02000163">
    <property type="protein sequence ID" value="EAL62209.1"/>
    <property type="molecule type" value="Genomic_DNA"/>
</dbReference>
<dbReference type="RefSeq" id="XP_635714.1">
    <property type="nucleotide sequence ID" value="XM_630622.1"/>
</dbReference>
<dbReference type="FunCoup" id="Q54G58">
    <property type="interactions" value="131"/>
</dbReference>
<dbReference type="GlyGen" id="Q54G58">
    <property type="glycosylation" value="4 sites"/>
</dbReference>
<dbReference type="PaxDb" id="44689-DDB0267123"/>
<dbReference type="EnsemblProtists" id="EAL62209">
    <property type="protein sequence ID" value="EAL62209"/>
    <property type="gene ID" value="DDB_G0290387"/>
</dbReference>
<dbReference type="GeneID" id="8627632"/>
<dbReference type="KEGG" id="ddi:DDB_G0290387"/>
<dbReference type="dictyBase" id="DDB_G0290387"/>
<dbReference type="VEuPathDB" id="AmoebaDB:DDB_G0290387"/>
<dbReference type="eggNOG" id="ENOG502RFU4">
    <property type="taxonomic scope" value="Eukaryota"/>
</dbReference>
<dbReference type="HOGENOM" id="CLU_904397_0_0_1"/>
<dbReference type="InParanoid" id="Q54G58"/>
<dbReference type="OMA" id="MGNGECS"/>
<dbReference type="PhylomeDB" id="Q54G58"/>
<dbReference type="PRO" id="PR:Q54G58"/>
<dbReference type="Proteomes" id="UP000002195">
    <property type="component" value="Chromosome 5"/>
</dbReference>
<dbReference type="GO" id="GO:0005576">
    <property type="term" value="C:extracellular region"/>
    <property type="evidence" value="ECO:0007669"/>
    <property type="project" value="UniProtKB-SubCell"/>
</dbReference>
<dbReference type="InterPro" id="IPR021837">
    <property type="entry name" value="CfaA/B/C"/>
</dbReference>
<dbReference type="PANTHER" id="PTHR33576">
    <property type="entry name" value="CARBOHYDRATE BINDING DOMAIN-CONTAINING PROTEIN-RELATED"/>
    <property type="match status" value="1"/>
</dbReference>
<dbReference type="PANTHER" id="PTHR33576:SF2">
    <property type="entry name" value="TRANSMEMBRANE PROTEIN"/>
    <property type="match status" value="1"/>
</dbReference>
<dbReference type="Pfam" id="PF11912">
    <property type="entry name" value="CfaA_B_C"/>
    <property type="match status" value="1"/>
</dbReference>
<organism>
    <name type="scientific">Dictyostelium discoideum</name>
    <name type="common">Social amoeba</name>
    <dbReference type="NCBI Taxonomy" id="44689"/>
    <lineage>
        <taxon>Eukaryota</taxon>
        <taxon>Amoebozoa</taxon>
        <taxon>Evosea</taxon>
        <taxon>Eumycetozoa</taxon>
        <taxon>Dictyostelia</taxon>
        <taxon>Dictyosteliales</taxon>
        <taxon>Dictyosteliaceae</taxon>
        <taxon>Dictyostelium</taxon>
    </lineage>
</organism>
<name>Y0387_DICDI</name>
<gene>
    <name type="ORF">DDB_G0290387</name>
</gene>